<keyword id="KW-0378">Hydrolase</keyword>
<feature type="chain" id="PRO_0000402753" description="3-aminoacrylate deaminase RutC">
    <location>
        <begin position="1"/>
        <end position="130"/>
    </location>
</feature>
<name>RUTC_KLEVT</name>
<gene>
    <name evidence="1" type="primary">rutC</name>
    <name type="ordered locus">Kvar_3343</name>
</gene>
<protein>
    <recommendedName>
        <fullName evidence="1">3-aminoacrylate deaminase RutC</fullName>
        <shortName evidence="1">3-AA deaminase</shortName>
        <ecNumber evidence="1">3.5.-.-</ecNumber>
    </recommendedName>
</protein>
<sequence>MPKQVIIPPGTTTPIAPFVPGTLADGVVYVSGTLPFDKQNNVVHIGDPKAQTRHVLETIKSVIETAGGSMADVTFNSIFITDWTNYAAINEVYAEFFPGDKPARFCIQCGLVKPDALVEIASVAHIGTPT</sequence>
<comment type="function">
    <text evidence="1">Involved in pyrimidine catabolism. Catalyzes the deamination of 3-aminoacrylate to malonic semialdehyde, a reaction that can also occur spontaneously. RutC may facilitate the reaction and modulate the metabolic fitness, rather than catalyzing essential functions.</text>
</comment>
<comment type="catalytic activity">
    <reaction evidence="1">
        <text>(Z)-3-aminoacrylate + H2O + H(+) = 3-oxopropanoate + NH4(+)</text>
        <dbReference type="Rhea" id="RHEA:34947"/>
        <dbReference type="ChEBI" id="CHEBI:15377"/>
        <dbReference type="ChEBI" id="CHEBI:15378"/>
        <dbReference type="ChEBI" id="CHEBI:28938"/>
        <dbReference type="ChEBI" id="CHEBI:33190"/>
        <dbReference type="ChEBI" id="CHEBI:59894"/>
    </reaction>
</comment>
<comment type="similarity">
    <text evidence="1">Belongs to the RutC family.</text>
</comment>
<organism>
    <name type="scientific">Klebsiella variicola (strain At-22)</name>
    <dbReference type="NCBI Taxonomy" id="640131"/>
    <lineage>
        <taxon>Bacteria</taxon>
        <taxon>Pseudomonadati</taxon>
        <taxon>Pseudomonadota</taxon>
        <taxon>Gammaproteobacteria</taxon>
        <taxon>Enterobacterales</taxon>
        <taxon>Enterobacteriaceae</taxon>
        <taxon>Klebsiella/Raoultella group</taxon>
        <taxon>Klebsiella</taxon>
        <taxon>Klebsiella pneumoniae complex</taxon>
    </lineage>
</organism>
<accession>D3RKL2</accession>
<reference key="1">
    <citation type="submission" date="2010-02" db="EMBL/GenBank/DDBJ databases">
        <title>Complete sequence of Klebsiella variicola At-22.</title>
        <authorList>
            <consortium name="US DOE Joint Genome Institute"/>
            <person name="Lucas S."/>
            <person name="Copeland A."/>
            <person name="Lapidus A."/>
            <person name="Cheng J.-F."/>
            <person name="Bruce D."/>
            <person name="Goodwin L."/>
            <person name="Pitluck S."/>
            <person name="Davenport K."/>
            <person name="Brettin T."/>
            <person name="Detter J.C."/>
            <person name="Han C."/>
            <person name="Tapia R."/>
            <person name="Larimer F."/>
            <person name="Land M."/>
            <person name="Hauser L."/>
            <person name="Kyrpides N."/>
            <person name="Ivanova N."/>
            <person name="Pinto A."/>
            <person name="Currie C."/>
            <person name="Woyke T."/>
        </authorList>
    </citation>
    <scope>NUCLEOTIDE SEQUENCE [LARGE SCALE GENOMIC DNA]</scope>
    <source>
        <strain>At-22</strain>
    </source>
</reference>
<dbReference type="EC" id="3.5.-.-" evidence="1"/>
<dbReference type="EMBL" id="CP001891">
    <property type="protein sequence ID" value="ADC59223.1"/>
    <property type="molecule type" value="Genomic_DNA"/>
</dbReference>
<dbReference type="RefSeq" id="WP_004204505.1">
    <property type="nucleotide sequence ID" value="NC_013850.1"/>
</dbReference>
<dbReference type="SMR" id="D3RKL2"/>
<dbReference type="KEGG" id="kva:Kvar_3343"/>
<dbReference type="HOGENOM" id="CLU_100715_7_3_6"/>
<dbReference type="GO" id="GO:0005829">
    <property type="term" value="C:cytosol"/>
    <property type="evidence" value="ECO:0007669"/>
    <property type="project" value="TreeGrafter"/>
</dbReference>
<dbReference type="GO" id="GO:0019239">
    <property type="term" value="F:deaminase activity"/>
    <property type="evidence" value="ECO:0007669"/>
    <property type="project" value="TreeGrafter"/>
</dbReference>
<dbReference type="GO" id="GO:0019740">
    <property type="term" value="P:nitrogen utilization"/>
    <property type="evidence" value="ECO:0007669"/>
    <property type="project" value="UniProtKB-UniRule"/>
</dbReference>
<dbReference type="GO" id="GO:0006212">
    <property type="term" value="P:uracil catabolic process"/>
    <property type="evidence" value="ECO:0007669"/>
    <property type="project" value="UniProtKB-UniRule"/>
</dbReference>
<dbReference type="CDD" id="cd00448">
    <property type="entry name" value="YjgF_YER057c_UK114_family"/>
    <property type="match status" value="1"/>
</dbReference>
<dbReference type="Gene3D" id="3.30.1330.40">
    <property type="entry name" value="RutC-like"/>
    <property type="match status" value="1"/>
</dbReference>
<dbReference type="HAMAP" id="MF_00831">
    <property type="entry name" value="RutC"/>
    <property type="match status" value="1"/>
</dbReference>
<dbReference type="InterPro" id="IPR019897">
    <property type="entry name" value="RidA_CS"/>
</dbReference>
<dbReference type="InterPro" id="IPR019898">
    <property type="entry name" value="RutC"/>
</dbReference>
<dbReference type="InterPro" id="IPR035959">
    <property type="entry name" value="RutC-like_sf"/>
</dbReference>
<dbReference type="InterPro" id="IPR006175">
    <property type="entry name" value="YjgF/YER057c/UK114"/>
</dbReference>
<dbReference type="NCBIfam" id="TIGR03610">
    <property type="entry name" value="RutC"/>
    <property type="match status" value="1"/>
</dbReference>
<dbReference type="PANTHER" id="PTHR11803">
    <property type="entry name" value="2-IMINOBUTANOATE/2-IMINOPROPANOATE DEAMINASE RIDA"/>
    <property type="match status" value="1"/>
</dbReference>
<dbReference type="PANTHER" id="PTHR11803:SF58">
    <property type="entry name" value="PROTEIN HMF1-RELATED"/>
    <property type="match status" value="1"/>
</dbReference>
<dbReference type="Pfam" id="PF01042">
    <property type="entry name" value="Ribonuc_L-PSP"/>
    <property type="match status" value="1"/>
</dbReference>
<dbReference type="SUPFAM" id="SSF55298">
    <property type="entry name" value="YjgF-like"/>
    <property type="match status" value="1"/>
</dbReference>
<dbReference type="PROSITE" id="PS01094">
    <property type="entry name" value="UPF0076"/>
    <property type="match status" value="1"/>
</dbReference>
<evidence type="ECO:0000255" key="1">
    <source>
        <dbReference type="HAMAP-Rule" id="MF_00831"/>
    </source>
</evidence>
<proteinExistence type="inferred from homology"/>